<keyword id="KW-0067">ATP-binding</keyword>
<keyword id="KW-0143">Chaperone</keyword>
<keyword id="KW-0963">Cytoplasm</keyword>
<keyword id="KW-0547">Nucleotide-binding</keyword>
<keyword id="KW-1185">Reference proteome</keyword>
<keyword id="KW-0346">Stress response</keyword>
<sequence>MSSNQEPLVEGKIKDKHSETHGFEVDVNQMMDTMIKSVYSSKELFLRELVSNSSDACDKLKALYFQLREKGCVLDPVTSLGIEIIPNKDNRTLTIKDNGIGMTKPDLMNFIGTIASSGTKKFREEMKEKGNSADASNLIGQFGLGFYSSYLVAERVDLITKHPSDEALVWTSTGRDVYTIEEYDGEPFAHGTSLVLYIKEGEEEFLDPKRISEIVKKYSLFVFYPIYTYVEKEIEEPEEKKDEEKEDEKVEEETAEPRVEEVREKRLKKVTEREQINVEKPLWKRNIKEVPEEELKSFYKTVSGDWDDFLAVDFWHIEGLLSIELLMFIPKRARFDMFNKNKKNNNIKLYCKNVFVTDDFGDAIPEWMSFVSGVVASDDIPMNISREMIQGTNVMKLVKKTLPQKIFEMIGKLALDAEKYKTFYKEFGNCLKMAIGEASEGQQDGYAKCLRYFTTKSGEEAISLDTYVERMAPNQKQIYVITGLSKEQVKSNPALDAFQKYEVIYMHEVMDEVMLRGLKKYKGHTIQRITSEGVELPEDEASNEEVVKSFEEFCKKVKDILSSKVEKVTVNPRLVSVPAVISTTKYSLSGTMENIMKSQPVTEANPFAAMTAVSKKIFEMNPNHQLVKNLKALFDSNEIEKMNRILEVFFETVLIHNGFVLSDPKGFCANVFDFLCSEEVRCEEPVEEVQ</sequence>
<comment type="function">
    <text evidence="1">Molecular chaperone that promotes the maturation, structural maintenance and proper regulation of specific target proteins involved in cell cycle control and signal transduction. Undergoes a functional cycle that is linked to its ATPase activity. The nucleotide-free form of the dimer is found in an open conformation in which the N-termini are not dimerized and the complex is ready for client protein binding. Binding of ATP induces large conformational changes, resulting in the formation of a ring-like closed structure in which the N-terminal domains associate intramolecularly with the middle domain and also dimerize with each other, stimulating their intrinsic ATPase activity and acting as a clamp on the substrate. Finally, ATP hydrolysis results in the release of the substrate. This cycle probably induces conformational changes in the client proteins, thereby causing their activation. Interacts dynamically with various co-chaperones that modulate its substrate recognition, ATPase cycle and chaperone function. Required for growth at high temperatures (By similarity).</text>
</comment>
<comment type="subunit">
    <text evidence="1">Homodimer.</text>
</comment>
<comment type="subcellular location">
    <subcellularLocation>
        <location evidence="1">Cytoplasm</location>
    </subcellularLocation>
</comment>
<comment type="developmental stage">
    <text evidence="3">Expressed in late sporogonial stages.</text>
</comment>
<comment type="domain">
    <text evidence="1">The TPR repeat-binding motif mediates interaction with TPR repeat-containing proteins.</text>
</comment>
<comment type="similarity">
    <text evidence="4">Belongs to the heat shock protein 90 family.</text>
</comment>
<name>HSP82_ENCCU</name>
<reference key="1">
    <citation type="journal article" date="2001" name="Nature">
        <title>Genome sequence and gene compaction of the eukaryote parasite Encephalitozoon cuniculi.</title>
        <authorList>
            <person name="Katinka M.D."/>
            <person name="Duprat S."/>
            <person name="Cornillot E."/>
            <person name="Metenier G."/>
            <person name="Thomarat F."/>
            <person name="Prensier G."/>
            <person name="Barbe V."/>
            <person name="Peyretaillade E."/>
            <person name="Brottier P."/>
            <person name="Wincker P."/>
            <person name="Delbac F."/>
            <person name="El Alaoui H."/>
            <person name="Peyret P."/>
            <person name="Saurin W."/>
            <person name="Gouy M."/>
            <person name="Weissenbach J."/>
            <person name="Vivares C.P."/>
        </authorList>
    </citation>
    <scope>NUCLEOTIDE SEQUENCE [LARGE SCALE GENOMIC DNA]</scope>
    <source>
        <strain>GB-M1</strain>
    </source>
</reference>
<reference key="2">
    <citation type="journal article" date="2006" name="Proteomics">
        <title>Proteomic analysis of the eukaryotic parasite Encephalitozoon cuniculi (microsporidia): a reference map for proteins expressed in late sporogonial stages.</title>
        <authorList>
            <person name="Brosson D."/>
            <person name="Kuhn L."/>
            <person name="Delbac F."/>
            <person name="Garin J."/>
            <person name="Vivares C.P."/>
            <person name="Texier C."/>
        </authorList>
    </citation>
    <scope>IDENTIFICATION BY MASS SPECTROMETRY [LARGE SCALE ANALYSIS]</scope>
    <scope>DEVELOPMENTAL STAGE</scope>
</reference>
<proteinExistence type="evidence at protein level"/>
<evidence type="ECO:0000250" key="1"/>
<evidence type="ECO:0000256" key="2">
    <source>
        <dbReference type="SAM" id="MobiDB-lite"/>
    </source>
</evidence>
<evidence type="ECO:0000269" key="3">
    <source>
    </source>
</evidence>
<evidence type="ECO:0000305" key="4"/>
<feature type="chain" id="PRO_0000383097" description="Heat shock protein 90">
    <location>
        <begin position="1"/>
        <end position="690"/>
    </location>
</feature>
<feature type="region of interest" description="Disordered" evidence="2">
    <location>
        <begin position="235"/>
        <end position="257"/>
    </location>
</feature>
<feature type="short sequence motif" description="TPR repeat-binding">
    <location>
        <begin position="686"/>
        <end position="690"/>
    </location>
</feature>
<feature type="compositionally biased region" description="Acidic residues" evidence="2">
    <location>
        <begin position="244"/>
        <end position="254"/>
    </location>
</feature>
<feature type="binding site" evidence="1">
    <location>
        <position position="52"/>
    </location>
    <ligand>
        <name>ATP</name>
        <dbReference type="ChEBI" id="CHEBI:30616"/>
    </ligand>
</feature>
<feature type="binding site" evidence="1">
    <location>
        <position position="97"/>
    </location>
    <ligand>
        <name>ATP</name>
        <dbReference type="ChEBI" id="CHEBI:30616"/>
    </ligand>
</feature>
<feature type="binding site" evidence="1">
    <location>
        <position position="146"/>
    </location>
    <ligand>
        <name>ATP</name>
        <dbReference type="ChEBI" id="CHEBI:30616"/>
    </ligand>
</feature>
<feature type="binding site" evidence="1">
    <location>
        <position position="386"/>
    </location>
    <ligand>
        <name>ATP</name>
        <dbReference type="ChEBI" id="CHEBI:30616"/>
    </ligand>
</feature>
<organism>
    <name type="scientific">Encephalitozoon cuniculi (strain GB-M1)</name>
    <name type="common">Microsporidian parasite</name>
    <dbReference type="NCBI Taxonomy" id="284813"/>
    <lineage>
        <taxon>Eukaryota</taxon>
        <taxon>Fungi</taxon>
        <taxon>Fungi incertae sedis</taxon>
        <taxon>Microsporidia</taxon>
        <taxon>Unikaryonidae</taxon>
        <taxon>Encephalitozoon</taxon>
    </lineage>
</organism>
<dbReference type="EMBL" id="AL590442">
    <property type="protein sequence ID" value="CAD25139.1"/>
    <property type="molecule type" value="Genomic_DNA"/>
</dbReference>
<dbReference type="RefSeq" id="NP_584635.1">
    <property type="nucleotide sequence ID" value="NM_001040824.1"/>
</dbReference>
<dbReference type="SMR" id="Q8SSE8"/>
<dbReference type="FunCoup" id="Q8SSE8">
    <property type="interactions" value="197"/>
</dbReference>
<dbReference type="STRING" id="284813.Q8SSE8"/>
<dbReference type="GeneID" id="858625"/>
<dbReference type="KEGG" id="ecu:ECU02_1100"/>
<dbReference type="VEuPathDB" id="MicrosporidiaDB:ECU02_1100"/>
<dbReference type="HOGENOM" id="CLU_006684_1_3_1"/>
<dbReference type="InParanoid" id="Q8SSE8"/>
<dbReference type="OMA" id="MRRMKEM"/>
<dbReference type="OrthoDB" id="28737at2759"/>
<dbReference type="Proteomes" id="UP000000819">
    <property type="component" value="Chromosome II"/>
</dbReference>
<dbReference type="GO" id="GO:0005737">
    <property type="term" value="C:cytoplasm"/>
    <property type="evidence" value="ECO:0007669"/>
    <property type="project" value="UniProtKB-SubCell"/>
</dbReference>
<dbReference type="GO" id="GO:0005524">
    <property type="term" value="F:ATP binding"/>
    <property type="evidence" value="ECO:0007669"/>
    <property type="project" value="UniProtKB-KW"/>
</dbReference>
<dbReference type="GO" id="GO:0016887">
    <property type="term" value="F:ATP hydrolysis activity"/>
    <property type="evidence" value="ECO:0007669"/>
    <property type="project" value="InterPro"/>
</dbReference>
<dbReference type="GO" id="GO:0140662">
    <property type="term" value="F:ATP-dependent protein folding chaperone"/>
    <property type="evidence" value="ECO:0007669"/>
    <property type="project" value="InterPro"/>
</dbReference>
<dbReference type="GO" id="GO:0051082">
    <property type="term" value="F:unfolded protein binding"/>
    <property type="evidence" value="ECO:0007669"/>
    <property type="project" value="InterPro"/>
</dbReference>
<dbReference type="CDD" id="cd16927">
    <property type="entry name" value="HATPase_Hsp90-like"/>
    <property type="match status" value="1"/>
</dbReference>
<dbReference type="FunFam" id="3.30.565.10:FF:000005">
    <property type="entry name" value="Heat shock protein 90"/>
    <property type="match status" value="1"/>
</dbReference>
<dbReference type="Gene3D" id="3.30.230.80">
    <property type="match status" value="1"/>
</dbReference>
<dbReference type="Gene3D" id="3.40.50.11260">
    <property type="match status" value="1"/>
</dbReference>
<dbReference type="Gene3D" id="1.20.120.790">
    <property type="entry name" value="Heat shock protein 90, C-terminal domain"/>
    <property type="match status" value="1"/>
</dbReference>
<dbReference type="Gene3D" id="3.30.565.10">
    <property type="entry name" value="Histidine kinase-like ATPase, C-terminal domain"/>
    <property type="match status" value="1"/>
</dbReference>
<dbReference type="HAMAP" id="MF_00505">
    <property type="entry name" value="HSP90"/>
    <property type="match status" value="1"/>
</dbReference>
<dbReference type="InterPro" id="IPR036890">
    <property type="entry name" value="HATPase_C_sf"/>
</dbReference>
<dbReference type="InterPro" id="IPR037196">
    <property type="entry name" value="HSP90_C"/>
</dbReference>
<dbReference type="InterPro" id="IPR001404">
    <property type="entry name" value="Hsp90_fam"/>
</dbReference>
<dbReference type="InterPro" id="IPR020575">
    <property type="entry name" value="Hsp90_N"/>
</dbReference>
<dbReference type="InterPro" id="IPR020568">
    <property type="entry name" value="Ribosomal_Su5_D2-typ_SF"/>
</dbReference>
<dbReference type="NCBIfam" id="NF003555">
    <property type="entry name" value="PRK05218.1"/>
    <property type="match status" value="1"/>
</dbReference>
<dbReference type="PANTHER" id="PTHR11528">
    <property type="entry name" value="HEAT SHOCK PROTEIN 90 FAMILY MEMBER"/>
    <property type="match status" value="1"/>
</dbReference>
<dbReference type="Pfam" id="PF13589">
    <property type="entry name" value="HATPase_c_3"/>
    <property type="match status" value="1"/>
</dbReference>
<dbReference type="Pfam" id="PF00183">
    <property type="entry name" value="HSP90"/>
    <property type="match status" value="1"/>
</dbReference>
<dbReference type="PIRSF" id="PIRSF002583">
    <property type="entry name" value="Hsp90"/>
    <property type="match status" value="1"/>
</dbReference>
<dbReference type="PRINTS" id="PR00775">
    <property type="entry name" value="HEATSHOCK90"/>
</dbReference>
<dbReference type="SUPFAM" id="SSF55874">
    <property type="entry name" value="ATPase domain of HSP90 chaperone/DNA topoisomerase II/histidine kinase"/>
    <property type="match status" value="1"/>
</dbReference>
<dbReference type="SUPFAM" id="SSF110942">
    <property type="entry name" value="HSP90 C-terminal domain"/>
    <property type="match status" value="1"/>
</dbReference>
<dbReference type="SUPFAM" id="SSF54211">
    <property type="entry name" value="Ribosomal protein S5 domain 2-like"/>
    <property type="match status" value="1"/>
</dbReference>
<protein>
    <recommendedName>
        <fullName>Heat shock protein 90</fullName>
    </recommendedName>
</protein>
<gene>
    <name type="primary">HSP90</name>
    <name type="ordered locus">ECU02_1100</name>
</gene>
<accession>Q8SSE8</accession>